<accession>Q5WGL4</accession>
<reference key="1">
    <citation type="submission" date="2003-10" db="EMBL/GenBank/DDBJ databases">
        <title>The complete genome sequence of the alkaliphilic Bacillus clausii KSM-K16.</title>
        <authorList>
            <person name="Takaki Y."/>
            <person name="Kageyama Y."/>
            <person name="Shimamura S."/>
            <person name="Suzuki H."/>
            <person name="Nishi S."/>
            <person name="Hatada Y."/>
            <person name="Kawai S."/>
            <person name="Ito S."/>
            <person name="Horikoshi K."/>
        </authorList>
    </citation>
    <scope>NUCLEOTIDE SEQUENCE [LARGE SCALE GENOMIC DNA]</scope>
    <source>
        <strain>KSM-K16</strain>
    </source>
</reference>
<keyword id="KW-0963">Cytoplasm</keyword>
<keyword id="KW-0238">DNA-binding</keyword>
<keyword id="KW-1185">Reference proteome</keyword>
<keyword id="KW-0804">Transcription</keyword>
<keyword id="KW-0805">Transcription regulation</keyword>
<protein>
    <recommendedName>
        <fullName evidence="1">Probable transcriptional regulatory protein ABC1956</fullName>
    </recommendedName>
</protein>
<feature type="chain" id="PRO_0000175761" description="Probable transcriptional regulatory protein ABC1956">
    <location>
        <begin position="1"/>
        <end position="238"/>
    </location>
</feature>
<name>Y1956_SHOC1</name>
<comment type="subcellular location">
    <subcellularLocation>
        <location evidence="1">Cytoplasm</location>
    </subcellularLocation>
</comment>
<comment type="similarity">
    <text evidence="1">Belongs to the TACO1 family. YeeN subfamily.</text>
</comment>
<gene>
    <name type="ordered locus">ABC1956</name>
</gene>
<organism>
    <name type="scientific">Shouchella clausii (strain KSM-K16)</name>
    <name type="common">Alkalihalobacillus clausii</name>
    <dbReference type="NCBI Taxonomy" id="66692"/>
    <lineage>
        <taxon>Bacteria</taxon>
        <taxon>Bacillati</taxon>
        <taxon>Bacillota</taxon>
        <taxon>Bacilli</taxon>
        <taxon>Bacillales</taxon>
        <taxon>Bacillaceae</taxon>
        <taxon>Shouchella</taxon>
    </lineage>
</organism>
<sequence>MGRKWNNIKEKKASKDANTSRIYAKFGREIYVAARQGEPDPELNQALKAVLERAKTYNVPKSIIDRAIEKAKGGSDESYEERRYEGFGPNGAMVIVDALTNNVNRTASDVRAAFGKNGGNMGVSGSVAYMFDRVAVIGFEGKTADEALEILMDADVDAKDIIEEDDTVIVYAEPDQFHAVQEAFRNAGIEEFSVAEFSMIAHNEVTLSEDVQAQFEKMIDAIEDLEDVQQVYHNVDLA</sequence>
<proteinExistence type="inferred from homology"/>
<dbReference type="EMBL" id="AP006627">
    <property type="protein sequence ID" value="BAD64491.1"/>
    <property type="molecule type" value="Genomic_DNA"/>
</dbReference>
<dbReference type="RefSeq" id="WP_011246799.1">
    <property type="nucleotide sequence ID" value="NC_006582.1"/>
</dbReference>
<dbReference type="SMR" id="Q5WGL4"/>
<dbReference type="STRING" id="66692.ABC1956"/>
<dbReference type="KEGG" id="bcl:ABC1956"/>
<dbReference type="eggNOG" id="COG0217">
    <property type="taxonomic scope" value="Bacteria"/>
</dbReference>
<dbReference type="HOGENOM" id="CLU_062974_2_0_9"/>
<dbReference type="OrthoDB" id="9781053at2"/>
<dbReference type="Proteomes" id="UP000001168">
    <property type="component" value="Chromosome"/>
</dbReference>
<dbReference type="GO" id="GO:0005829">
    <property type="term" value="C:cytosol"/>
    <property type="evidence" value="ECO:0007669"/>
    <property type="project" value="TreeGrafter"/>
</dbReference>
<dbReference type="GO" id="GO:0003677">
    <property type="term" value="F:DNA binding"/>
    <property type="evidence" value="ECO:0007669"/>
    <property type="project" value="UniProtKB-UniRule"/>
</dbReference>
<dbReference type="GO" id="GO:0006355">
    <property type="term" value="P:regulation of DNA-templated transcription"/>
    <property type="evidence" value="ECO:0007669"/>
    <property type="project" value="UniProtKB-UniRule"/>
</dbReference>
<dbReference type="FunFam" id="1.10.10.200:FF:000003">
    <property type="entry name" value="Probable transcriptional regulatory protein YeeN"/>
    <property type="match status" value="1"/>
</dbReference>
<dbReference type="FunFam" id="3.30.70.980:FF:000004">
    <property type="entry name" value="Probable transcriptional regulatory protein YeeN"/>
    <property type="match status" value="1"/>
</dbReference>
<dbReference type="Gene3D" id="1.10.10.200">
    <property type="match status" value="1"/>
</dbReference>
<dbReference type="Gene3D" id="3.30.70.980">
    <property type="match status" value="2"/>
</dbReference>
<dbReference type="HAMAP" id="MF_00693">
    <property type="entry name" value="Transcrip_reg_TACO1"/>
    <property type="match status" value="1"/>
</dbReference>
<dbReference type="HAMAP" id="MF_00918">
    <property type="entry name" value="Transcrip_reg_TACO1_YeeN"/>
    <property type="match status" value="1"/>
</dbReference>
<dbReference type="InterPro" id="IPR017856">
    <property type="entry name" value="Integrase-like_N"/>
</dbReference>
<dbReference type="InterPro" id="IPR048300">
    <property type="entry name" value="TACO1_YebC-like_2nd/3rd_dom"/>
</dbReference>
<dbReference type="InterPro" id="IPR049083">
    <property type="entry name" value="TACO1_YebC_N"/>
</dbReference>
<dbReference type="InterPro" id="IPR002876">
    <property type="entry name" value="Transcrip_reg_TACO1-like"/>
</dbReference>
<dbReference type="InterPro" id="IPR026564">
    <property type="entry name" value="Transcrip_reg_TACO1-like_dom3"/>
</dbReference>
<dbReference type="InterPro" id="IPR026562">
    <property type="entry name" value="Transcrip_reg_TACO1_YeeN"/>
</dbReference>
<dbReference type="InterPro" id="IPR029072">
    <property type="entry name" value="YebC-like"/>
</dbReference>
<dbReference type="NCBIfam" id="NF001030">
    <property type="entry name" value="PRK00110.1"/>
    <property type="match status" value="1"/>
</dbReference>
<dbReference type="NCBIfam" id="NF009044">
    <property type="entry name" value="PRK12378.1"/>
    <property type="match status" value="1"/>
</dbReference>
<dbReference type="NCBIfam" id="TIGR01033">
    <property type="entry name" value="YebC/PmpR family DNA-binding transcriptional regulator"/>
    <property type="match status" value="1"/>
</dbReference>
<dbReference type="PANTHER" id="PTHR12532">
    <property type="entry name" value="TRANSLATIONAL ACTIVATOR OF CYTOCHROME C OXIDASE 1"/>
    <property type="match status" value="1"/>
</dbReference>
<dbReference type="PANTHER" id="PTHR12532:SF0">
    <property type="entry name" value="TRANSLATIONAL ACTIVATOR OF CYTOCHROME C OXIDASE 1"/>
    <property type="match status" value="1"/>
</dbReference>
<dbReference type="Pfam" id="PF20772">
    <property type="entry name" value="TACO1_YebC_N"/>
    <property type="match status" value="1"/>
</dbReference>
<dbReference type="Pfam" id="PF01709">
    <property type="entry name" value="Transcrip_reg"/>
    <property type="match status" value="1"/>
</dbReference>
<dbReference type="SUPFAM" id="SSF75625">
    <property type="entry name" value="YebC-like"/>
    <property type="match status" value="1"/>
</dbReference>
<evidence type="ECO:0000255" key="1">
    <source>
        <dbReference type="HAMAP-Rule" id="MF_00918"/>
    </source>
</evidence>